<organism>
    <name type="scientific">Yersinia pestis bv. Antiqua (strain Antiqua)</name>
    <dbReference type="NCBI Taxonomy" id="360102"/>
    <lineage>
        <taxon>Bacteria</taxon>
        <taxon>Pseudomonadati</taxon>
        <taxon>Pseudomonadota</taxon>
        <taxon>Gammaproteobacteria</taxon>
        <taxon>Enterobacterales</taxon>
        <taxon>Yersiniaceae</taxon>
        <taxon>Yersinia</taxon>
    </lineage>
</organism>
<reference key="1">
    <citation type="journal article" date="2006" name="J. Bacteriol.">
        <title>Complete genome sequence of Yersinia pestis strains Antiqua and Nepal516: evidence of gene reduction in an emerging pathogen.</title>
        <authorList>
            <person name="Chain P.S.G."/>
            <person name="Hu P."/>
            <person name="Malfatti S.A."/>
            <person name="Radnedge L."/>
            <person name="Larimer F."/>
            <person name="Vergez L.M."/>
            <person name="Worsham P."/>
            <person name="Chu M.C."/>
            <person name="Andersen G.L."/>
        </authorList>
    </citation>
    <scope>NUCLEOTIDE SEQUENCE [LARGE SCALE GENOMIC DNA]</scope>
    <source>
        <strain>Antiqua</strain>
    </source>
</reference>
<dbReference type="EC" id="3.4.24.-" evidence="1"/>
<dbReference type="EMBL" id="CP000308">
    <property type="protein sequence ID" value="ABG13781.1"/>
    <property type="molecule type" value="Genomic_DNA"/>
</dbReference>
<dbReference type="RefSeq" id="WP_002210847.1">
    <property type="nucleotide sequence ID" value="NZ_CP009906.1"/>
</dbReference>
<dbReference type="SMR" id="Q1C6Z1"/>
<dbReference type="MEROPS" id="M48.002"/>
<dbReference type="GeneID" id="57976872"/>
<dbReference type="KEGG" id="ypa:YPA_1815"/>
<dbReference type="Proteomes" id="UP000001971">
    <property type="component" value="Chromosome"/>
</dbReference>
<dbReference type="GO" id="GO:0005886">
    <property type="term" value="C:plasma membrane"/>
    <property type="evidence" value="ECO:0007669"/>
    <property type="project" value="UniProtKB-SubCell"/>
</dbReference>
<dbReference type="GO" id="GO:0004222">
    <property type="term" value="F:metalloendopeptidase activity"/>
    <property type="evidence" value="ECO:0007669"/>
    <property type="project" value="UniProtKB-UniRule"/>
</dbReference>
<dbReference type="GO" id="GO:0008270">
    <property type="term" value="F:zinc ion binding"/>
    <property type="evidence" value="ECO:0007669"/>
    <property type="project" value="UniProtKB-UniRule"/>
</dbReference>
<dbReference type="GO" id="GO:0006508">
    <property type="term" value="P:proteolysis"/>
    <property type="evidence" value="ECO:0007669"/>
    <property type="project" value="UniProtKB-KW"/>
</dbReference>
<dbReference type="CDD" id="cd07335">
    <property type="entry name" value="M48B_HtpX_like"/>
    <property type="match status" value="1"/>
</dbReference>
<dbReference type="FunFam" id="3.30.2010.10:FF:000001">
    <property type="entry name" value="Protease HtpX"/>
    <property type="match status" value="1"/>
</dbReference>
<dbReference type="Gene3D" id="3.30.2010.10">
    <property type="entry name" value="Metalloproteases ('zincins'), catalytic domain"/>
    <property type="match status" value="1"/>
</dbReference>
<dbReference type="HAMAP" id="MF_00188">
    <property type="entry name" value="Pept_M48_protease_HtpX"/>
    <property type="match status" value="1"/>
</dbReference>
<dbReference type="InterPro" id="IPR050083">
    <property type="entry name" value="HtpX_protease"/>
</dbReference>
<dbReference type="InterPro" id="IPR022919">
    <property type="entry name" value="Pept_M48_protease_HtpX"/>
</dbReference>
<dbReference type="InterPro" id="IPR001915">
    <property type="entry name" value="Peptidase_M48"/>
</dbReference>
<dbReference type="NCBIfam" id="NF003965">
    <property type="entry name" value="PRK05457.1"/>
    <property type="match status" value="1"/>
</dbReference>
<dbReference type="PANTHER" id="PTHR43221">
    <property type="entry name" value="PROTEASE HTPX"/>
    <property type="match status" value="1"/>
</dbReference>
<dbReference type="PANTHER" id="PTHR43221:SF1">
    <property type="entry name" value="PROTEASE HTPX"/>
    <property type="match status" value="1"/>
</dbReference>
<dbReference type="Pfam" id="PF01435">
    <property type="entry name" value="Peptidase_M48"/>
    <property type="match status" value="1"/>
</dbReference>
<proteinExistence type="inferred from homology"/>
<gene>
    <name evidence="1" type="primary">htpX</name>
    <name type="ordered locus">YPA_1815</name>
</gene>
<comment type="cofactor">
    <cofactor evidence="1">
        <name>Zn(2+)</name>
        <dbReference type="ChEBI" id="CHEBI:29105"/>
    </cofactor>
    <text evidence="1">Binds 1 zinc ion per subunit.</text>
</comment>
<comment type="subcellular location">
    <subcellularLocation>
        <location evidence="1">Cell inner membrane</location>
        <topology evidence="1">Multi-pass membrane protein</topology>
    </subcellularLocation>
</comment>
<comment type="similarity">
    <text evidence="1">Belongs to the peptidase M48B family.</text>
</comment>
<accession>Q1C6Z1</accession>
<protein>
    <recommendedName>
        <fullName evidence="1">Protease HtpX</fullName>
        <ecNumber evidence="1">3.4.24.-</ecNumber>
    </recommendedName>
    <alternativeName>
        <fullName evidence="1">Heat shock protein HtpX</fullName>
    </alternativeName>
</protein>
<name>HTPX_YERPA</name>
<evidence type="ECO:0000255" key="1">
    <source>
        <dbReference type="HAMAP-Rule" id="MF_00188"/>
    </source>
</evidence>
<feature type="chain" id="PRO_1000020973" description="Protease HtpX">
    <location>
        <begin position="1"/>
        <end position="293"/>
    </location>
</feature>
<feature type="transmembrane region" description="Helical" evidence="1">
    <location>
        <begin position="4"/>
        <end position="24"/>
    </location>
</feature>
<feature type="transmembrane region" description="Helical" evidence="1">
    <location>
        <begin position="34"/>
        <end position="54"/>
    </location>
</feature>
<feature type="transmembrane region" description="Helical" evidence="1">
    <location>
        <begin position="158"/>
        <end position="178"/>
    </location>
</feature>
<feature type="transmembrane region" description="Helical" evidence="1">
    <location>
        <begin position="193"/>
        <end position="213"/>
    </location>
</feature>
<feature type="active site" evidence="1">
    <location>
        <position position="140"/>
    </location>
</feature>
<feature type="binding site" evidence="1">
    <location>
        <position position="139"/>
    </location>
    <ligand>
        <name>Zn(2+)</name>
        <dbReference type="ChEBI" id="CHEBI:29105"/>
        <note>catalytic</note>
    </ligand>
</feature>
<feature type="binding site" evidence="1">
    <location>
        <position position="143"/>
    </location>
    <ligand>
        <name>Zn(2+)</name>
        <dbReference type="ChEBI" id="CHEBI:29105"/>
        <note>catalytic</note>
    </ligand>
</feature>
<feature type="binding site" evidence="1">
    <location>
        <position position="222"/>
    </location>
    <ligand>
        <name>Zn(2+)</name>
        <dbReference type="ChEBI" id="CHEBI:29105"/>
        <note>catalytic</note>
    </ligand>
</feature>
<keyword id="KW-0997">Cell inner membrane</keyword>
<keyword id="KW-1003">Cell membrane</keyword>
<keyword id="KW-0378">Hydrolase</keyword>
<keyword id="KW-0472">Membrane</keyword>
<keyword id="KW-0479">Metal-binding</keyword>
<keyword id="KW-0482">Metalloprotease</keyword>
<keyword id="KW-0645">Protease</keyword>
<keyword id="KW-0346">Stress response</keyword>
<keyword id="KW-0812">Transmembrane</keyword>
<keyword id="KW-1133">Transmembrane helix</keyword>
<keyword id="KW-0862">Zinc</keyword>
<sequence length="293" mass="32064">MMRIALFLLTNLAVMLVFGLVLSLTGIQSSSVQGLMIMAGLFGFGGAFVSLLMSKWMALRSVGGEVIERPRNETEYWLLETVRRQSQQVGIAMPQVAIYQAPDINAFATGARRDASLVAVSTGLLQNMSRDEAEAVIAHEISHVANGDMVTMTLIQGVVNTFVIFISRLIAQIAAGFLSGDRDGESNSPGNPMVYFAVSMVLELVFGILASIITMWFSRHREFHADAGSAKLVGREKMIAALQRLKTSYEPQEAGSMMAFCINGKSKTFSELFMSHPPLDKRIEALRSGQYLK</sequence>